<accession>Q5L706</accession>
<proteinExistence type="inferred from homology"/>
<comment type="function">
    <text evidence="1">This protein binds to the 23S rRNA, and is important in its secondary structure. It is located near the subunit interface in the base of the L7/L12 stalk, and near the tRNA binding site of the peptidyltransferase center.</text>
</comment>
<comment type="subunit">
    <text evidence="1">Part of the 50S ribosomal subunit.</text>
</comment>
<comment type="similarity">
    <text evidence="1">Belongs to the universal ribosomal protein uL6 family.</text>
</comment>
<keyword id="KW-0687">Ribonucleoprotein</keyword>
<keyword id="KW-0689">Ribosomal protein</keyword>
<keyword id="KW-0694">RNA-binding</keyword>
<keyword id="KW-0699">rRNA-binding</keyword>
<sequence length="183" mass="20094">MSRKARDPIVLPQGVEVSIQNNEILVKGPKGSLKQVLAPEVVIDIKGREVFVHPAPYVVDRPSRMQGLFWALISNMVQGVSVGFEKRLEMIGVGFRASVQGSILDLSIGVSHPTKIPIPADIQVSVEKNTIISVKGINKQLVGEFAANIRAKRKPEPYKGKGIRYENEYVRRKAGKAAKTGKK</sequence>
<feature type="chain" id="PRO_0000265240" description="Large ribosomal subunit protein uL6">
    <location>
        <begin position="1"/>
        <end position="183"/>
    </location>
</feature>
<organism>
    <name type="scientific">Chlamydia abortus (strain DSM 27085 / S26/3)</name>
    <name type="common">Chlamydophila abortus</name>
    <dbReference type="NCBI Taxonomy" id="218497"/>
    <lineage>
        <taxon>Bacteria</taxon>
        <taxon>Pseudomonadati</taxon>
        <taxon>Chlamydiota</taxon>
        <taxon>Chlamydiia</taxon>
        <taxon>Chlamydiales</taxon>
        <taxon>Chlamydiaceae</taxon>
        <taxon>Chlamydia/Chlamydophila group</taxon>
        <taxon>Chlamydia</taxon>
    </lineage>
</organism>
<reference key="1">
    <citation type="journal article" date="2005" name="Genome Res.">
        <title>The Chlamydophila abortus genome sequence reveals an array of variable proteins that contribute to interspecies variation.</title>
        <authorList>
            <person name="Thomson N.R."/>
            <person name="Yeats C."/>
            <person name="Bell K."/>
            <person name="Holden M.T.G."/>
            <person name="Bentley S.D."/>
            <person name="Livingstone M."/>
            <person name="Cerdeno-Tarraga A.-M."/>
            <person name="Harris B."/>
            <person name="Doggett J."/>
            <person name="Ormond D."/>
            <person name="Mungall K."/>
            <person name="Clarke K."/>
            <person name="Feltwell T."/>
            <person name="Hance Z."/>
            <person name="Sanders M."/>
            <person name="Quail M.A."/>
            <person name="Price C."/>
            <person name="Barrell B.G."/>
            <person name="Parkhill J."/>
            <person name="Longbottom D."/>
        </authorList>
    </citation>
    <scope>NUCLEOTIDE SEQUENCE [LARGE SCALE GENOMIC DNA]</scope>
    <source>
        <strain>DSM 27085 / S26/3</strain>
    </source>
</reference>
<evidence type="ECO:0000255" key="1">
    <source>
        <dbReference type="HAMAP-Rule" id="MF_01365"/>
    </source>
</evidence>
<evidence type="ECO:0000305" key="2"/>
<name>RL6_CHLAB</name>
<protein>
    <recommendedName>
        <fullName evidence="1">Large ribosomal subunit protein uL6</fullName>
    </recommendedName>
    <alternativeName>
        <fullName evidence="2">50S ribosomal protein L6</fullName>
    </alternativeName>
</protein>
<gene>
    <name evidence="1" type="primary">rplF</name>
    <name type="ordered locus">CAB106</name>
</gene>
<dbReference type="EMBL" id="CR848038">
    <property type="protein sequence ID" value="CAH63564.1"/>
    <property type="molecule type" value="Genomic_DNA"/>
</dbReference>
<dbReference type="RefSeq" id="WP_011096832.1">
    <property type="nucleotide sequence ID" value="NC_004552.2"/>
</dbReference>
<dbReference type="SMR" id="Q5L706"/>
<dbReference type="KEGG" id="cab:CAB106"/>
<dbReference type="eggNOG" id="COG0097">
    <property type="taxonomic scope" value="Bacteria"/>
</dbReference>
<dbReference type="HOGENOM" id="CLU_065464_1_2_0"/>
<dbReference type="OrthoDB" id="9805007at2"/>
<dbReference type="Proteomes" id="UP000001012">
    <property type="component" value="Chromosome"/>
</dbReference>
<dbReference type="GO" id="GO:0022625">
    <property type="term" value="C:cytosolic large ribosomal subunit"/>
    <property type="evidence" value="ECO:0007669"/>
    <property type="project" value="TreeGrafter"/>
</dbReference>
<dbReference type="GO" id="GO:0019843">
    <property type="term" value="F:rRNA binding"/>
    <property type="evidence" value="ECO:0007669"/>
    <property type="project" value="UniProtKB-UniRule"/>
</dbReference>
<dbReference type="GO" id="GO:0003735">
    <property type="term" value="F:structural constituent of ribosome"/>
    <property type="evidence" value="ECO:0007669"/>
    <property type="project" value="InterPro"/>
</dbReference>
<dbReference type="GO" id="GO:0002181">
    <property type="term" value="P:cytoplasmic translation"/>
    <property type="evidence" value="ECO:0007669"/>
    <property type="project" value="TreeGrafter"/>
</dbReference>
<dbReference type="FunFam" id="3.90.930.12:FF:000001">
    <property type="entry name" value="50S ribosomal protein L6"/>
    <property type="match status" value="1"/>
</dbReference>
<dbReference type="Gene3D" id="3.90.930.12">
    <property type="entry name" value="Ribosomal protein L6, alpha-beta domain"/>
    <property type="match status" value="2"/>
</dbReference>
<dbReference type="HAMAP" id="MF_01365_B">
    <property type="entry name" value="Ribosomal_uL6_B"/>
    <property type="match status" value="1"/>
</dbReference>
<dbReference type="InterPro" id="IPR000702">
    <property type="entry name" value="Ribosomal_uL6-like"/>
</dbReference>
<dbReference type="InterPro" id="IPR036789">
    <property type="entry name" value="Ribosomal_uL6-like_a/b-dom_sf"/>
</dbReference>
<dbReference type="InterPro" id="IPR020040">
    <property type="entry name" value="Ribosomal_uL6_a/b-dom"/>
</dbReference>
<dbReference type="InterPro" id="IPR019906">
    <property type="entry name" value="Ribosomal_uL6_bac-type"/>
</dbReference>
<dbReference type="InterPro" id="IPR002358">
    <property type="entry name" value="Ribosomal_uL6_CS"/>
</dbReference>
<dbReference type="NCBIfam" id="TIGR03654">
    <property type="entry name" value="L6_bact"/>
    <property type="match status" value="1"/>
</dbReference>
<dbReference type="PANTHER" id="PTHR11655">
    <property type="entry name" value="60S/50S RIBOSOMAL PROTEIN L6/L9"/>
    <property type="match status" value="1"/>
</dbReference>
<dbReference type="PANTHER" id="PTHR11655:SF14">
    <property type="entry name" value="LARGE RIBOSOMAL SUBUNIT PROTEIN UL6M"/>
    <property type="match status" value="1"/>
</dbReference>
<dbReference type="Pfam" id="PF00347">
    <property type="entry name" value="Ribosomal_L6"/>
    <property type="match status" value="2"/>
</dbReference>
<dbReference type="PIRSF" id="PIRSF002162">
    <property type="entry name" value="Ribosomal_L6"/>
    <property type="match status" value="1"/>
</dbReference>
<dbReference type="PRINTS" id="PR00059">
    <property type="entry name" value="RIBOSOMALL6"/>
</dbReference>
<dbReference type="SUPFAM" id="SSF56053">
    <property type="entry name" value="Ribosomal protein L6"/>
    <property type="match status" value="2"/>
</dbReference>
<dbReference type="PROSITE" id="PS00525">
    <property type="entry name" value="RIBOSOMAL_L6_1"/>
    <property type="match status" value="1"/>
</dbReference>